<reference key="1">
    <citation type="journal article" date="2000" name="Nature">
        <title>The complete sequence of the mucosal pathogen Ureaplasma urealyticum.</title>
        <authorList>
            <person name="Glass J.I."/>
            <person name="Lefkowitz E.J."/>
            <person name="Glass J.S."/>
            <person name="Heiner C.R."/>
            <person name="Chen E.Y."/>
            <person name="Cassell G.H."/>
        </authorList>
    </citation>
    <scope>NUCLEOTIDE SEQUENCE [LARGE SCALE GENOMIC DNA]</scope>
    <source>
        <strain>ATCC 700970</strain>
    </source>
</reference>
<protein>
    <recommendedName>
        <fullName evidence="2">Large ribosomal subunit protein uL10</fullName>
    </recommendedName>
    <alternativeName>
        <fullName>50S ribosomal protein L10</fullName>
    </alternativeName>
</protein>
<keyword id="KW-1185">Reference proteome</keyword>
<keyword id="KW-0687">Ribonucleoprotein</keyword>
<keyword id="KW-0689">Ribosomal protein</keyword>
<keyword id="KW-0694">RNA-binding</keyword>
<keyword id="KW-0699">rRNA-binding</keyword>
<evidence type="ECO:0000250" key="1"/>
<evidence type="ECO:0000305" key="2"/>
<proteinExistence type="inferred from homology"/>
<comment type="function">
    <text evidence="1">Forms part of the ribosomal stalk, playing a central role in the interaction of the ribosome with GTP-bound translation factors.</text>
</comment>
<comment type="subunit">
    <text evidence="1">Part of the ribosomal stalk of the 50S ribosomal subunit. The N-terminus interacts with L11 and the large rRNA to form the base of the stalk. The C-terminus forms an elongated spine to which L12 dimers bind in a sequential fashion forming a multimeric L10(L12)X complex (By similarity).</text>
</comment>
<comment type="similarity">
    <text evidence="2">Belongs to the universal ribosomal protein uL10 family.</text>
</comment>
<feature type="chain" id="PRO_0000154742" description="Large ribosomal subunit protein uL10">
    <location>
        <begin position="1"/>
        <end position="166"/>
    </location>
</feature>
<dbReference type="EMBL" id="AF222894">
    <property type="protein sequence ID" value="AAF30415.1"/>
    <property type="molecule type" value="Genomic_DNA"/>
</dbReference>
<dbReference type="RefSeq" id="WP_006688636.1">
    <property type="nucleotide sequence ID" value="NC_002162.1"/>
</dbReference>
<dbReference type="SMR" id="Q9PRD5"/>
<dbReference type="STRING" id="273119.UU010"/>
<dbReference type="EnsemblBacteria" id="AAF30415">
    <property type="protein sequence ID" value="AAF30415"/>
    <property type="gene ID" value="UU010"/>
</dbReference>
<dbReference type="GeneID" id="29672245"/>
<dbReference type="KEGG" id="uur:UU010"/>
<dbReference type="eggNOG" id="COG0244">
    <property type="taxonomic scope" value="Bacteria"/>
</dbReference>
<dbReference type="HOGENOM" id="CLU_092227_2_0_14"/>
<dbReference type="OrthoDB" id="9808307at2"/>
<dbReference type="Proteomes" id="UP000000423">
    <property type="component" value="Chromosome"/>
</dbReference>
<dbReference type="GO" id="GO:0015934">
    <property type="term" value="C:large ribosomal subunit"/>
    <property type="evidence" value="ECO:0007669"/>
    <property type="project" value="InterPro"/>
</dbReference>
<dbReference type="GO" id="GO:0070180">
    <property type="term" value="F:large ribosomal subunit rRNA binding"/>
    <property type="evidence" value="ECO:0007669"/>
    <property type="project" value="UniProtKB-UniRule"/>
</dbReference>
<dbReference type="GO" id="GO:0003735">
    <property type="term" value="F:structural constituent of ribosome"/>
    <property type="evidence" value="ECO:0007669"/>
    <property type="project" value="InterPro"/>
</dbReference>
<dbReference type="GO" id="GO:0006412">
    <property type="term" value="P:translation"/>
    <property type="evidence" value="ECO:0007669"/>
    <property type="project" value="UniProtKB-UniRule"/>
</dbReference>
<dbReference type="CDD" id="cd05797">
    <property type="entry name" value="Ribosomal_L10"/>
    <property type="match status" value="1"/>
</dbReference>
<dbReference type="Gene3D" id="3.30.70.1730">
    <property type="match status" value="1"/>
</dbReference>
<dbReference type="HAMAP" id="MF_00362">
    <property type="entry name" value="Ribosomal_uL10"/>
    <property type="match status" value="1"/>
</dbReference>
<dbReference type="InterPro" id="IPR001790">
    <property type="entry name" value="Ribosomal_uL10"/>
</dbReference>
<dbReference type="InterPro" id="IPR043141">
    <property type="entry name" value="Ribosomal_uL10-like_sf"/>
</dbReference>
<dbReference type="InterPro" id="IPR022973">
    <property type="entry name" value="Ribosomal_uL10_bac"/>
</dbReference>
<dbReference type="InterPro" id="IPR047865">
    <property type="entry name" value="Ribosomal_uL10_bac_type"/>
</dbReference>
<dbReference type="InterPro" id="IPR002363">
    <property type="entry name" value="Ribosomal_uL10_CS_bac"/>
</dbReference>
<dbReference type="NCBIfam" id="NF000955">
    <property type="entry name" value="PRK00099.1-1"/>
    <property type="match status" value="1"/>
</dbReference>
<dbReference type="PANTHER" id="PTHR11560">
    <property type="entry name" value="39S RIBOSOMAL PROTEIN L10, MITOCHONDRIAL"/>
    <property type="match status" value="1"/>
</dbReference>
<dbReference type="Pfam" id="PF00466">
    <property type="entry name" value="Ribosomal_L10"/>
    <property type="match status" value="1"/>
</dbReference>
<dbReference type="SUPFAM" id="SSF160369">
    <property type="entry name" value="Ribosomal protein L10-like"/>
    <property type="match status" value="1"/>
</dbReference>
<dbReference type="PROSITE" id="PS01109">
    <property type="entry name" value="RIBOSOMAL_L10"/>
    <property type="match status" value="1"/>
</dbReference>
<accession>Q9PRD5</accession>
<organism>
    <name type="scientific">Ureaplasma parvum serovar 3 (strain ATCC 700970)</name>
    <dbReference type="NCBI Taxonomy" id="273119"/>
    <lineage>
        <taxon>Bacteria</taxon>
        <taxon>Bacillati</taxon>
        <taxon>Mycoplasmatota</taxon>
        <taxon>Mycoplasmoidales</taxon>
        <taxon>Mycoplasmoidaceae</taxon>
        <taxon>Ureaplasma</taxon>
    </lineage>
</organism>
<gene>
    <name type="primary">rplJ</name>
    <name type="synonym">rpl10</name>
    <name type="ordered locus">UU010</name>
</gene>
<sequence length="166" mass="18220">MANVRPSVVFKQQEVNHMADILKNSKSFIVFEYHGLTAANILALRNVLHSSNSKLYVLKNNITARAFEKAGVSGFENQLTGPNAVAVAMDDEIAAIKAVNDVAKEFDFVKIKGAYLENKFADTHKIDQLAAIPGREGLYSMLLSCFTAPLRNVMYGLKAVAEQKGE</sequence>
<name>RL10_UREPA</name>